<reference key="1">
    <citation type="journal article" date="1996" name="Proc. Natl. Acad. Sci. U.S.A.">
        <title>The virion glycoproteins of Ebola viruses are encoded in two reading frames and are expressed through transcriptional editing.</title>
        <authorList>
            <person name="Sanchez A."/>
            <person name="Trappier S.G."/>
            <person name="Mahy B.W.J."/>
            <person name="Peters C.J."/>
            <person name="Nichol S.T."/>
        </authorList>
    </citation>
    <scope>NUCLEOTIDE SEQUENCE [GENOMIC RNA]</scope>
    <scope>RNA EDITING</scope>
</reference>
<reference key="2">
    <citation type="submission" date="1997-11" db="EMBL/GenBank/DDBJ databases">
        <authorList>
            <person name="Volchkov V.E."/>
        </authorList>
    </citation>
    <scope>NUCLEOTIDE SEQUENCE [GENOMIC RNA]</scope>
</reference>
<reference key="3">
    <citation type="journal article" date="2002" name="Virus Res.">
        <title>Molecular characterization of an isolate from the 1989/90 epizootic of Ebola virus Reston among macaques imported into the United States.</title>
        <authorList>
            <person name="Groseth A."/>
            <person name="Stroeher U."/>
            <person name="Theriault S."/>
            <person name="Feldmann H."/>
        </authorList>
    </citation>
    <scope>NUCLEOTIDE SEQUENCE [GENOMIC RNA]</scope>
</reference>
<reference key="4">
    <citation type="journal article" date="2005" name="Virology">
        <title>A reconstituted replication and transcription system for Ebola virus Reston and comparison with Ebola virus Zaire.</title>
        <authorList>
            <person name="Boehmann Y."/>
            <person name="Enterlein S."/>
            <person name="Randolf A."/>
            <person name="Muehlberger E.I."/>
        </authorList>
    </citation>
    <scope>NUCLEOTIDE SEQUENCE [GENOMIC RNA]</scope>
    <source>
        <strain>Isolate Pennsylvania-89</strain>
    </source>
</reference>
<reference key="5">
    <citation type="journal article" date="2002" name="J. Virol.">
        <title>Ebola virus glycoproteins induce global surface protein down-modulation and loss of cell adherence.</title>
        <authorList>
            <person name="Simmons G."/>
            <person name="Wool-Lewis R.J."/>
            <person name="Baribaud F."/>
            <person name="Netter R.C."/>
            <person name="Bates P."/>
        </authorList>
    </citation>
    <scope>FUNCTION</scope>
</reference>
<gene>
    <name type="primary">GP</name>
</gene>
<organism>
    <name type="scientific">Reston ebolavirus (strain Reston-89)</name>
    <name type="common">REBOV</name>
    <name type="synonym">Reston Ebola virus</name>
    <dbReference type="NCBI Taxonomy" id="386032"/>
    <lineage>
        <taxon>Viruses</taxon>
        <taxon>Riboviria</taxon>
        <taxon>Orthornavirae</taxon>
        <taxon>Negarnaviricota</taxon>
        <taxon>Haploviricotina</taxon>
        <taxon>Monjiviricetes</taxon>
        <taxon>Mononegavirales</taxon>
        <taxon>Filoviridae</taxon>
        <taxon>Orthoebolavirus</taxon>
        <taxon>Orthoebolavirus restonense</taxon>
        <taxon>Reston ebolavirus</taxon>
    </lineage>
</organism>
<sequence>MGSGYQLLQLPRERFRKTSFLVWVIILFQRAISMPLGIVTNSTLKATEIDQLVCRDKLSSTSQLKSVGLNLEGNGIATDVPSATKRWGFRSGVPPKVVSYEAGEWAENCYNLEIKKSDGSECLPLPPDGVRGFPRCRYVHKVQGTGPCPGDLAFHKNGAFFLYDRLASTVIYRGTTFAEGVVAFLILSEPKKHFWKATPAHEPVNTTDDSTSYYMTLTLSYEMSNFGGNESNTLFKVDNHTYVQLDRPHTPQFLVQLNETLRRNNRLSNSTGRLTWTLDPKIEPDVGEWAFWETKKNFSQQLHGENLHFQILSTHTNNSSDQSPAGTVQGKISYHPPANNSELVPTDSPPVVSVLTAGRTEEMSTQGLTNGETITGFTANPMTTTIAPSPTMTSEVDNNVPSEQPNNTASIEDSPPSASNETIYHSEMDPIQGSNNSAQSPQTKTTPAPTTSPMTQDPQETANSSKPGTSPGSAAGPSQPGLTINTVSKVADSLSPTRKQKRSVRQNTANKCNPDLYYWTAVDEGAAVGLAWIPYFGPAAEGIYIEGVMHNQNGLICGLRQLANETTQALQLFLRATTELRTYSLLNRKAIDFLLQRWGGTCRILGPSCCIEPHDWTKNITDEINQIKHDFIDNPLPDHGDDLNLWTGWRQWIPAGIGIIGVIIAIIALLCICKILC</sequence>
<feature type="signal peptide" evidence="5">
    <location>
        <begin position="1"/>
        <end position="33"/>
    </location>
</feature>
<feature type="chain" id="PRO_0000037470" description="Envelope glycoprotein">
    <location>
        <begin position="34"/>
        <end position="677"/>
    </location>
</feature>
<feature type="chain" id="PRO_0000037471" description="GP1" evidence="1">
    <location>
        <begin position="34"/>
        <end position="502"/>
    </location>
</feature>
<feature type="chain" id="PRO_0000037472" description="GP2" evidence="1">
    <location>
        <begin position="503"/>
        <end position="677"/>
    </location>
</feature>
<feature type="chain" id="PRO_0000245061" description="Shed GP" evidence="1">
    <location>
        <begin position="503"/>
        <end position="638"/>
    </location>
</feature>
<feature type="topological domain" description="Extracellular" evidence="5">
    <location>
        <begin position="34"/>
        <end position="651"/>
    </location>
</feature>
<feature type="transmembrane region" description="Helical" evidence="5">
    <location>
        <begin position="652"/>
        <end position="672"/>
    </location>
</feature>
<feature type="topological domain" description="Cytoplasmic" evidence="5">
    <location>
        <begin position="673"/>
        <end position="677"/>
    </location>
</feature>
<feature type="region of interest" description="Receptor-binding" evidence="1">
    <location>
        <begin position="55"/>
        <end position="202"/>
    </location>
</feature>
<feature type="region of interest" description="Mucin-like region" evidence="1">
    <location>
        <begin position="306"/>
        <end position="486"/>
    </location>
</feature>
<feature type="region of interest" description="Disordered" evidence="6">
    <location>
        <begin position="315"/>
        <end position="349"/>
    </location>
</feature>
<feature type="region of interest" description="Disordered" evidence="6">
    <location>
        <begin position="361"/>
        <end position="484"/>
    </location>
</feature>
<feature type="region of interest" description="Fusion peptide" evidence="1">
    <location>
        <begin position="525"/>
        <end position="540"/>
    </location>
</feature>
<feature type="coiled-coil region" evidence="5">
    <location>
        <begin position="555"/>
        <end position="596"/>
    </location>
</feature>
<feature type="coiled-coil region" evidence="5">
    <location>
        <begin position="616"/>
        <end position="635"/>
    </location>
</feature>
<feature type="compositionally biased region" description="Polar residues" evidence="6">
    <location>
        <begin position="315"/>
        <end position="326"/>
    </location>
</feature>
<feature type="compositionally biased region" description="Polar residues" evidence="6">
    <location>
        <begin position="363"/>
        <end position="423"/>
    </location>
</feature>
<feature type="compositionally biased region" description="Polar residues" evidence="6">
    <location>
        <begin position="432"/>
        <end position="472"/>
    </location>
</feature>
<feature type="site" description="Involved in receptor recognition and/or post-binding events" evidence="5">
    <location>
        <position position="58"/>
    </location>
</feature>
<feature type="site" description="Involved in receptor recognition and/or post-binding events" evidence="5">
    <location>
        <position position="64"/>
    </location>
</feature>
<feature type="site" description="Involved in receptor recognition and/or post-binding events" evidence="5">
    <location>
        <position position="89"/>
    </location>
</feature>
<feature type="site" description="Involved in receptor recognition and/or post-binding events" evidence="5">
    <location>
        <position position="96"/>
    </location>
</feature>
<feature type="site" description="Involved in receptor recognition and/or post-binding events" evidence="5">
    <location>
        <position position="171"/>
    </location>
</feature>
<feature type="site" description="Cleavage; by host furin" evidence="1">
    <location>
        <begin position="502"/>
        <end position="503"/>
    </location>
</feature>
<feature type="site" description="Cleavage; by host ADAM17" evidence="1">
    <location>
        <begin position="638"/>
        <end position="639"/>
    </location>
</feature>
<feature type="lipid moiety-binding region" description="S-palmitoyl cysteine; by host" evidence="3">
    <location>
        <position position="671"/>
    </location>
</feature>
<feature type="lipid moiety-binding region" description="S-palmitoyl cysteine; by host" evidence="3">
    <location>
        <position position="673"/>
    </location>
</feature>
<feature type="glycosylation site" description="N-linked (GlcNAc...) asparagine; by host" evidence="5">
    <location>
        <position position="41"/>
    </location>
</feature>
<feature type="glycosylation site" description="N-linked (GlcNAc...) asparagine; by host" evidence="5">
    <location>
        <position position="205"/>
    </location>
</feature>
<feature type="glycosylation site" description="N-linked (GlcNAc...) asparagine; by host" evidence="5">
    <location>
        <position position="229"/>
    </location>
</feature>
<feature type="glycosylation site" description="N-linked (GlcNAc...) asparagine; by host" evidence="5">
    <location>
        <position position="239"/>
    </location>
</feature>
<feature type="glycosylation site" description="N-linked (GlcNAc...) asparagine; by host" evidence="5">
    <location>
        <position position="258"/>
    </location>
</feature>
<feature type="glycosylation site" description="N-linked (GlcNAc...) asparagine; by host" evidence="5">
    <location>
        <position position="269"/>
    </location>
</feature>
<feature type="glycosylation site" description="N-linked (GlcNAc...) asparagine; by host" evidence="5">
    <location>
        <position position="297"/>
    </location>
</feature>
<feature type="glycosylation site" description="N-linked (GlcNAc...) asparagine; by host" evidence="5">
    <location>
        <position position="317"/>
    </location>
</feature>
<feature type="glycosylation site" description="N-linked (GlcNAc...) asparagine; by host" evidence="5">
    <location>
        <position position="318"/>
    </location>
</feature>
<feature type="glycosylation site" description="N-linked (GlcNAc...) asparagine; by host" evidence="5">
    <location>
        <position position="339"/>
    </location>
</feature>
<feature type="glycosylation site" description="N-linked (GlcNAc...) asparagine; by host" evidence="5">
    <location>
        <position position="406"/>
    </location>
</feature>
<feature type="glycosylation site" description="N-linked (GlcNAc...) asparagine; by host" evidence="5">
    <location>
        <position position="420"/>
    </location>
</feature>
<feature type="glycosylation site" description="N-linked (GlcNAc...) asparagine; by host" evidence="5">
    <location>
        <position position="435"/>
    </location>
</feature>
<feature type="glycosylation site" description="N-linked (GlcNAc...) asparagine; by host" evidence="5">
    <location>
        <position position="463"/>
    </location>
</feature>
<feature type="glycosylation site" description="N-linked (GlcNAc...) asparagine; by host" evidence="5">
    <location>
        <position position="564"/>
    </location>
</feature>
<feature type="glycosylation site" description="N-linked (GlcNAc...) asparagine; by host" evidence="5">
    <location>
        <position position="619"/>
    </location>
</feature>
<feature type="disulfide bond" description="Interchain (between GP1 and GP2 chains)" evidence="1">
    <location>
        <begin position="54"/>
        <end position="610"/>
    </location>
</feature>
<feature type="disulfide bond" evidence="5">
    <location>
        <begin position="109"/>
        <end position="136"/>
    </location>
</feature>
<feature type="disulfide bond" evidence="5">
    <location>
        <begin position="122"/>
        <end position="148"/>
    </location>
</feature>
<feature type="disulfide bond" evidence="5">
    <location>
        <begin position="512"/>
        <end position="557"/>
    </location>
</feature>
<feature type="disulfide bond" evidence="2">
    <location>
        <begin position="602"/>
        <end position="609"/>
    </location>
</feature>
<feature type="sequence variant">
    <original>L</original>
    <variation>P</variation>
    <location>
        <position position="312"/>
    </location>
</feature>
<name>VGP_EBORR</name>
<accession>Q66799</accession>
<accession>Q5UAK8</accession>
<accession>Q8JPX8</accession>
<keyword id="KW-1165">Clathrin-mediated endocytosis of virus by host</keyword>
<keyword id="KW-0165">Cleavage on pair of basic residues</keyword>
<keyword id="KW-0175">Coiled coil</keyword>
<keyword id="KW-1015">Disulfide bond</keyword>
<keyword id="KW-1170">Fusion of virus membrane with host endosomal membrane</keyword>
<keyword id="KW-1168">Fusion of virus membrane with host membrane</keyword>
<keyword id="KW-0325">Glycoprotein</keyword>
<keyword id="KW-1032">Host cell membrane</keyword>
<keyword id="KW-1043">Host membrane</keyword>
<keyword id="KW-0945">Host-virus interaction</keyword>
<keyword id="KW-1090">Inhibition of host innate immune response by virus</keyword>
<keyword id="KW-1084">Inhibition of host tetherin by virus</keyword>
<keyword id="KW-0449">Lipoprotein</keyword>
<keyword id="KW-0472">Membrane</keyword>
<keyword id="KW-0564">Palmitate</keyword>
<keyword id="KW-0691">RNA editing</keyword>
<keyword id="KW-0964">Secreted</keyword>
<keyword id="KW-0732">Signal</keyword>
<keyword id="KW-0812">Transmembrane</keyword>
<keyword id="KW-1133">Transmembrane helix</keyword>
<keyword id="KW-1161">Viral attachment to host cell</keyword>
<keyword id="KW-1234">Viral attachment to host entry receptor</keyword>
<keyword id="KW-0261">Viral envelope protein</keyword>
<keyword id="KW-0899">Viral immunoevasion</keyword>
<keyword id="KW-1162">Viral penetration into host cytoplasm</keyword>
<keyword id="KW-0946">Virion</keyword>
<keyword id="KW-1164">Virus endocytosis by host</keyword>
<keyword id="KW-1160">Virus entry into host cell</keyword>
<organismHost>
    <name type="scientific">Epomops franqueti</name>
    <name type="common">Franquet's epauletted fruit bat</name>
    <name type="synonym">Epomophorus franqueti</name>
    <dbReference type="NCBI Taxonomy" id="77231"/>
</organismHost>
<organismHost>
    <name type="scientific">Homo sapiens</name>
    <name type="common">Human</name>
    <dbReference type="NCBI Taxonomy" id="9606"/>
</organismHost>
<organismHost>
    <name type="scientific">Myonycteris torquata</name>
    <name type="common">Little collared fruit bat</name>
    <dbReference type="NCBI Taxonomy" id="77243"/>
</organismHost>
<organismHost>
    <name type="scientific">Sus scrofa</name>
    <name type="common">Pig</name>
    <dbReference type="NCBI Taxonomy" id="9823"/>
</organismHost>
<evidence type="ECO:0000250" key="1"/>
<evidence type="ECO:0000250" key="2">
    <source>
        <dbReference type="UniProtKB" id="O11457"/>
    </source>
</evidence>
<evidence type="ECO:0000250" key="3">
    <source>
        <dbReference type="UniProtKB" id="Q05320"/>
    </source>
</evidence>
<evidence type="ECO:0000250" key="4">
    <source>
        <dbReference type="UniProtKB" id="Q66814"/>
    </source>
</evidence>
<evidence type="ECO:0000255" key="5"/>
<evidence type="ECO:0000256" key="6">
    <source>
        <dbReference type="SAM" id="MobiDB-lite"/>
    </source>
</evidence>
<evidence type="ECO:0000269" key="7">
    <source>
    </source>
</evidence>
<evidence type="ECO:0000269" key="8">
    <source>
    </source>
</evidence>
<evidence type="ECO:0000305" key="9"/>
<proteinExistence type="inferred from homology"/>
<comment type="function">
    <molecule>Envelope glycoprotein</molecule>
    <text evidence="3 7">Trimeric GP1,2 complexes form the virion surface spikes and mediate the viral entry processes, with GP1 acting as the receptor-binding subunit and GP2 as the membrane fusion subunit (By similarity). At later times of infection, down-regulates the expression of various host cell surface molecules that are essential for immune surveillance and cell adhesion (PubMed:11836430). Down-modulates several integrins including ITGA1, ITGA2, ITGA3, ITGA4, ITGA5, ITGA6, ITGAV and ITGB1. This decrease in cell adhesion molecules may lead to cell detachment, contributing to the disruption of blood vessel integrity and hemorrhages developed during infection (cytotoxicity). Interacts with host TLR4 and thereby stimulates the differentiation and activation of monocytes leading to bystander death of T-lymphocytes. Down-regulates as well the function of host natural killer cells. Counteracts the antiviral effect of host BST2/tetherin that restricts release of progeny virions from infected cells. However, cooperates with VP40 and host BST2 to activate canonical NF-kappa-B pathway in a manner dependent on neddylation (By similarity).</text>
</comment>
<comment type="function">
    <molecule>Shed GP</molecule>
    <text evidence="3">Functions as a decoy for anti-GP1,2 antibodies thereby contributing to viral immune evasion. Interacts and activates host macrophages and dendritic cells inducing up-regulation of cytokine transcription. This effect is mediated throught activation of host TLR4.</text>
</comment>
<comment type="function">
    <molecule>GP1</molecule>
    <text evidence="2 3 4">Responsible for binding to the receptor(s) on target cells. Interacts with CD209/DC-SIGN and CLEC4M/DC-SIGNR which act as cofactors for virus entry into dendritic cells (DCs) and endothelial cells (By similarity). Binding to the macrophage specific lectin CLEC10A also seems to enhance virus infectivity (By similarity). Interaction with FOLR1/folate receptor alpha may be a cofactor for virus entry in some cell types, although results are contradictory (By similarity). Members of the Tyro3 receptor tyrosine kinase family also seem to be cell entry factors in filovirus infection (By similarity). Once attached, the virions are internalized through clathrin-dependent endocytosis and/or macropinocytosis. After internalization of the virus into the endosomes of the host cell, proteolysis of GP1 by two cysteine proteases, CTSB/cathepsin B and CTSL/cathepsin L removes the glycan cap and allows GP1 binding to the host entry receptor NPC1. NPC1-binding, Ca(2+) and acidic pH induce a conformational change of GP2, which unmasks its fusion peptide and permit membranes fusion (By similarity).</text>
</comment>
<comment type="function">
    <molecule>GP2</molecule>
    <text evidence="3">Acts as a class I viral fusion protein. Under the current model, the protein has at least 3 conformational states: pre-fusion native state, pre-hairpin intermediate state, and post-fusion hairpin state. During viral and target cell membrane fusion, the coiled coil regions (heptad repeats) assume a trimer-of-hairpins structure, positioning the fusion peptide in close proximity to the C-terminal region of the ectodomain. The formation of this structure appears to drive apposition and subsequent fusion of viral and target cell membranes. Responsible for penetration of the virus into the cell cytoplasm by mediating the fusion of the membrane of the endocytosed virus particle with the endosomal membrane. Low pH in endosomes induces an irreversible conformational change in GP2, releasing the fusion hydrophobic peptide.</text>
</comment>
<comment type="subunit">
    <molecule>Envelope glycoprotein</molecule>
    <text evidence="3">Homotrimer; each monomer consists of a GP1 and a GP2 subunit linked by disulfide bonds. The resulting peplomers (GP1,2) protrude from the virus surface as spikes. Interacts with host integrin alpha-V/ITGAV. Interacts with host CLEC10A. Binds also to host CD209 and CLEC4M/DC-SIGN(R). Interacts with host FOLR1. Interacts with BST2; this interaction inhibits the antiviral effect of BST2 and this allows viral release from infected cells. Interacts with host FCN1; this interaction enhances viral entry. Interacts with host TLR4; this interaction induces cell death in T-lymphocytes or proinflammatory cytokines and SOCS1 production in monocytes.</text>
</comment>
<comment type="subunit">
    <molecule>GP1</molecule>
    <text evidence="3">Interacts with host entry receptor NPC1.</text>
</comment>
<comment type="subunit">
    <molecule>Shed GP</molecule>
    <text evidence="3">GP1 and GP2delta are part of GP1,2delta soluble complexes released by ectodomain shedding.</text>
</comment>
<comment type="subcellular location">
    <molecule>GP2</molecule>
    <subcellularLocation>
        <location evidence="3">Virion membrane</location>
        <topology evidence="5">Single-pass type I membrane protein</topology>
    </subcellularLocation>
    <subcellularLocation>
        <location evidence="3">Host cell membrane</location>
        <topology evidence="5">Single-pass type I membrane protein</topology>
    </subcellularLocation>
    <text evidence="3">In the cell, localizes to the plasma membrane lipid rafts, which probably represent the assembly and budding site.</text>
</comment>
<comment type="subcellular location">
    <molecule>GP1</molecule>
    <subcellularLocation>
        <location evidence="3">Virion membrane</location>
        <topology evidence="3">Peripheral membrane protein</topology>
    </subcellularLocation>
    <subcellularLocation>
        <location evidence="3">Host cell membrane</location>
        <topology evidence="3">Peripheral membrane protein</topology>
    </subcellularLocation>
    <text evidence="3">GP1 is not anchored to the viral envelope, but forms a disulfid-linked complex with the extravirion surface GP2. In the cell, both GP1 and GP2 localize to the plasma membrane lipid rafts, which probably represent the assembly and budding site. GP1 can also be shed after proteolytic processing.</text>
</comment>
<comment type="subcellular location">
    <molecule>Shed GP</molecule>
    <subcellularLocation>
        <location evidence="3">Secreted</location>
    </subcellularLocation>
    <text evidence="3">GP2-delta bound to GP1 (GP1,2-delta) is produced by proteolytic cleavage of GP1,2 by host ADAM17 and shed by the virus.</text>
</comment>
<comment type="domain">
    <text evidence="1">The mucin-like region seems to be involved in the cytotoxic function. This region is also involved in binding to human CLEC10A (By similarity).</text>
</comment>
<comment type="domain">
    <text evidence="1">The coiled coil regions play a role in oligomerization and fusion activity.</text>
</comment>
<comment type="PTM">
    <text evidence="1">The signal peptide region modulates GP's high mannose glycosylation, thereby determining the efficiency of the interactions with DC-SIGN(R).</text>
</comment>
<comment type="PTM">
    <text evidence="1">N-glycosylated.</text>
</comment>
<comment type="PTM">
    <text evidence="1">O-glycosylated in the mucin-like region.</text>
</comment>
<comment type="PTM">
    <text evidence="1">Palmitoylation of GP2 is not required for its function.</text>
</comment>
<comment type="PTM">
    <text evidence="1">Specific enzymatic cleavages in vivo yield mature proteins. The precursor is processed into GP1 and GP2 by host cell furin in the trans Golgi, and maybe by other host proteases, to yield the mature GP1 and GP2 proteins. The cleavage site corresponds to the furin optimal cleavage sequence [KR]-X-[KR]-R. This cleavage does not seem to be required for function. After the internalization of the virus into cell endosomes, GP1 C-terminus is removed by the endosomal proteases cathepsin B, cathepsin L, or both, leaving a 19-kDa N-terminal fragment which is further digested by cathepsin B. Proteolytic processing of GP1,2 by host ADAM17 can remove the transmembrane anchor of GP2 and leads to shedding of complexes consisting in GP1 and truncated GP2 (GP1,2delta) (By similarity).</text>
</comment>
<comment type="RNA editing">
    <location>
        <position position="296" evidence="8"/>
    </location>
    <text>Partially edited. RNA editing at this position consists of an insertion of one or two adenine nucleotides. The sequence displayed here is the full-length transmembrane glycoprotein GP, derived from the +1A edited RNA. The unedited RNA gives rise to the small secreted glycoprotein sGP (AC Q66800), the +2A edited RNA gives rise to the super small secreted glycoprotein ssGP (AC P0C771).</text>
</comment>
<comment type="miscellaneous">
    <text evidence="1">Filoviruses entry requires functional lipid rafts at the host cell surface.</text>
</comment>
<comment type="miscellaneous">
    <text>Essential for infectivity, as it is the sole viral protein expressed at the virion surface.</text>
</comment>
<comment type="similarity">
    <text evidence="9">Belongs to the filoviruses glycoprotein family.</text>
</comment>
<dbReference type="EMBL" id="U23152">
    <property type="protein sequence ID" value="AAC54885.1"/>
    <property type="molecule type" value="Genomic_RNA"/>
</dbReference>
<dbReference type="EMBL" id="AF034645">
    <property type="protein sequence ID" value="AAC24346.1"/>
    <property type="molecule type" value="Genomic_RNA"/>
</dbReference>
<dbReference type="EMBL" id="AF522874">
    <property type="protein sequence ID" value="AAN04455.1"/>
    <property type="molecule type" value="Genomic_RNA"/>
</dbReference>
<dbReference type="EMBL" id="AY769362">
    <property type="protein sequence ID" value="AAV48577.1"/>
    <property type="molecule type" value="Genomic_RNA"/>
</dbReference>
<dbReference type="RefSeq" id="NP_690583.1">
    <property type="nucleotide sequence ID" value="NC_004161.1"/>
</dbReference>
<dbReference type="SMR" id="Q66799"/>
<dbReference type="GlyCosmos" id="Q66799">
    <property type="glycosylation" value="16 sites, No reported glycans"/>
</dbReference>
<dbReference type="ABCD" id="Q66799">
    <property type="antibodies" value="1 sequenced antibody"/>
</dbReference>
<dbReference type="GeneID" id="955190"/>
<dbReference type="KEGG" id="vg:955190"/>
<dbReference type="Proteomes" id="UP000007207">
    <property type="component" value="Segment"/>
</dbReference>
<dbReference type="Proteomes" id="UP000138664">
    <property type="component" value="Genome"/>
</dbReference>
<dbReference type="GO" id="GO:0005576">
    <property type="term" value="C:extracellular region"/>
    <property type="evidence" value="ECO:0007669"/>
    <property type="project" value="UniProtKB-SubCell"/>
</dbReference>
<dbReference type="GO" id="GO:0020002">
    <property type="term" value="C:host cell plasma membrane"/>
    <property type="evidence" value="ECO:0007669"/>
    <property type="project" value="UniProtKB-SubCell"/>
</dbReference>
<dbReference type="GO" id="GO:0016020">
    <property type="term" value="C:membrane"/>
    <property type="evidence" value="ECO:0007669"/>
    <property type="project" value="UniProtKB-KW"/>
</dbReference>
<dbReference type="GO" id="GO:0019031">
    <property type="term" value="C:viral envelope"/>
    <property type="evidence" value="ECO:0007669"/>
    <property type="project" value="UniProtKB-KW"/>
</dbReference>
<dbReference type="GO" id="GO:0055036">
    <property type="term" value="C:virion membrane"/>
    <property type="evidence" value="ECO:0007669"/>
    <property type="project" value="UniProtKB-SubCell"/>
</dbReference>
<dbReference type="GO" id="GO:0075512">
    <property type="term" value="P:clathrin-dependent endocytosis of virus by host cell"/>
    <property type="evidence" value="ECO:0007669"/>
    <property type="project" value="UniProtKB-KW"/>
</dbReference>
<dbReference type="GO" id="GO:0098670">
    <property type="term" value="P:entry receptor-mediated virion attachment to host cell"/>
    <property type="evidence" value="ECO:0007669"/>
    <property type="project" value="UniProtKB-KW"/>
</dbReference>
<dbReference type="GO" id="GO:0039654">
    <property type="term" value="P:fusion of virus membrane with host endosome membrane"/>
    <property type="evidence" value="ECO:0007669"/>
    <property type="project" value="UniProtKB-KW"/>
</dbReference>
<dbReference type="GO" id="GO:0052170">
    <property type="term" value="P:symbiont-mediated suppression of host innate immune response"/>
    <property type="evidence" value="ECO:0007669"/>
    <property type="project" value="UniProtKB-KW"/>
</dbReference>
<dbReference type="GO" id="GO:0039587">
    <property type="term" value="P:symbiont-mediated-mediated suppression of host tetherin activity"/>
    <property type="evidence" value="ECO:0007669"/>
    <property type="project" value="UniProtKB-KW"/>
</dbReference>
<dbReference type="CDD" id="cd09850">
    <property type="entry name" value="Ebola-like_HR1-HR2"/>
    <property type="match status" value="1"/>
</dbReference>
<dbReference type="Gene3D" id="1.10.287.210">
    <property type="match status" value="1"/>
</dbReference>
<dbReference type="InterPro" id="IPR054584">
    <property type="entry name" value="Ebola-like_HR1-HR2"/>
</dbReference>
<dbReference type="InterPro" id="IPR014625">
    <property type="entry name" value="GPC_FiloV"/>
</dbReference>
<dbReference type="InterPro" id="IPR002561">
    <property type="entry name" value="GPC_filovir-type_extra_dom"/>
</dbReference>
<dbReference type="Pfam" id="PF22307">
    <property type="entry name" value="Ebola-like_HR1-HR2"/>
    <property type="match status" value="1"/>
</dbReference>
<dbReference type="Pfam" id="PF01611">
    <property type="entry name" value="Filo_glycop"/>
    <property type="match status" value="1"/>
</dbReference>
<dbReference type="PIRSF" id="PIRSF036874">
    <property type="entry name" value="GPC_FiloV"/>
    <property type="match status" value="1"/>
</dbReference>
<dbReference type="SUPFAM" id="SSF58069">
    <property type="entry name" value="Virus ectodomain"/>
    <property type="match status" value="1"/>
</dbReference>
<protein>
    <recommendedName>
        <fullName>Envelope glycoprotein</fullName>
    </recommendedName>
    <alternativeName>
        <fullName>GP1,2</fullName>
        <shortName>GP</shortName>
    </alternativeName>
    <component>
        <recommendedName>
            <fullName>GP1</fullName>
        </recommendedName>
    </component>
    <component>
        <recommendedName>
            <fullName>GP2</fullName>
        </recommendedName>
    </component>
    <component>
        <recommendedName>
            <fullName>Shed GP</fullName>
        </recommendedName>
        <alternativeName>
            <fullName>GP1,2-delta</fullName>
        </alternativeName>
    </component>
</protein>